<protein>
    <recommendedName>
        <fullName evidence="1">Putative membrane protein insertion efficiency factor</fullName>
    </recommendedName>
</protein>
<evidence type="ECO:0000255" key="1">
    <source>
        <dbReference type="HAMAP-Rule" id="MF_00386"/>
    </source>
</evidence>
<dbReference type="EMBL" id="CP001616">
    <property type="protein sequence ID" value="ACQ94756.1"/>
    <property type="molecule type" value="Genomic_DNA"/>
</dbReference>
<dbReference type="RefSeq" id="WP_015880205.1">
    <property type="nucleotide sequence ID" value="NC_012691.1"/>
</dbReference>
<dbReference type="STRING" id="595494.Tola_3168"/>
<dbReference type="KEGG" id="tau:Tola_3168"/>
<dbReference type="eggNOG" id="COG0759">
    <property type="taxonomic scope" value="Bacteria"/>
</dbReference>
<dbReference type="HOGENOM" id="CLU_144811_5_2_6"/>
<dbReference type="OrthoDB" id="9801753at2"/>
<dbReference type="Proteomes" id="UP000009073">
    <property type="component" value="Chromosome"/>
</dbReference>
<dbReference type="GO" id="GO:0005886">
    <property type="term" value="C:plasma membrane"/>
    <property type="evidence" value="ECO:0007669"/>
    <property type="project" value="UniProtKB-SubCell"/>
</dbReference>
<dbReference type="HAMAP" id="MF_00386">
    <property type="entry name" value="UPF0161_YidD"/>
    <property type="match status" value="1"/>
</dbReference>
<dbReference type="InterPro" id="IPR002696">
    <property type="entry name" value="Membr_insert_effic_factor_YidD"/>
</dbReference>
<dbReference type="NCBIfam" id="TIGR00278">
    <property type="entry name" value="membrane protein insertion efficiency factor YidD"/>
    <property type="match status" value="1"/>
</dbReference>
<dbReference type="PANTHER" id="PTHR33383">
    <property type="entry name" value="MEMBRANE PROTEIN INSERTION EFFICIENCY FACTOR-RELATED"/>
    <property type="match status" value="1"/>
</dbReference>
<dbReference type="PANTHER" id="PTHR33383:SF1">
    <property type="entry name" value="MEMBRANE PROTEIN INSERTION EFFICIENCY FACTOR-RELATED"/>
    <property type="match status" value="1"/>
</dbReference>
<dbReference type="Pfam" id="PF01809">
    <property type="entry name" value="YidD"/>
    <property type="match status" value="1"/>
</dbReference>
<dbReference type="SMART" id="SM01234">
    <property type="entry name" value="Haemolytic"/>
    <property type="match status" value="1"/>
</dbReference>
<comment type="function">
    <text evidence="1">Could be involved in insertion of integral membrane proteins into the membrane.</text>
</comment>
<comment type="subcellular location">
    <subcellularLocation>
        <location evidence="1">Cell inner membrane</location>
        <topology evidence="1">Peripheral membrane protein</topology>
        <orientation evidence="1">Cytoplasmic side</orientation>
    </subcellularLocation>
</comment>
<comment type="similarity">
    <text evidence="1">Belongs to the UPF0161 family.</text>
</comment>
<sequence>MAHPRTPQQRLAVALIRVYQWVISPLLGPRCRFTPTCSQYMINAICLHGLIKGIWLGGKRLLKCHPLHSGGHDPVPQPQQSKRRK</sequence>
<organism>
    <name type="scientific">Tolumonas auensis (strain DSM 9187 / NBRC 110442 / TA 4)</name>
    <dbReference type="NCBI Taxonomy" id="595494"/>
    <lineage>
        <taxon>Bacteria</taxon>
        <taxon>Pseudomonadati</taxon>
        <taxon>Pseudomonadota</taxon>
        <taxon>Gammaproteobacteria</taxon>
        <taxon>Aeromonadales</taxon>
        <taxon>Aeromonadaceae</taxon>
        <taxon>Tolumonas</taxon>
    </lineage>
</organism>
<gene>
    <name type="ordered locus">Tola_3168</name>
</gene>
<feature type="chain" id="PRO_1000205791" description="Putative membrane protein insertion efficiency factor">
    <location>
        <begin position="1"/>
        <end position="85"/>
    </location>
</feature>
<keyword id="KW-0997">Cell inner membrane</keyword>
<keyword id="KW-1003">Cell membrane</keyword>
<keyword id="KW-0472">Membrane</keyword>
<keyword id="KW-1185">Reference proteome</keyword>
<accession>C4LDZ5</accession>
<proteinExistence type="inferred from homology"/>
<reference key="1">
    <citation type="submission" date="2009-05" db="EMBL/GenBank/DDBJ databases">
        <title>Complete sequence of Tolumonas auensis DSM 9187.</title>
        <authorList>
            <consortium name="US DOE Joint Genome Institute"/>
            <person name="Lucas S."/>
            <person name="Copeland A."/>
            <person name="Lapidus A."/>
            <person name="Glavina del Rio T."/>
            <person name="Tice H."/>
            <person name="Bruce D."/>
            <person name="Goodwin L."/>
            <person name="Pitluck S."/>
            <person name="Chertkov O."/>
            <person name="Brettin T."/>
            <person name="Detter J.C."/>
            <person name="Han C."/>
            <person name="Larimer F."/>
            <person name="Land M."/>
            <person name="Hauser L."/>
            <person name="Kyrpides N."/>
            <person name="Mikhailova N."/>
            <person name="Spring S."/>
            <person name="Beller H."/>
        </authorList>
    </citation>
    <scope>NUCLEOTIDE SEQUENCE [LARGE SCALE GENOMIC DNA]</scope>
    <source>
        <strain>DSM 9187 / NBRC 110442 / TA 4</strain>
    </source>
</reference>
<name>YIDD_TOLAT</name>